<dbReference type="EMBL" id="AM494475">
    <property type="protein sequence ID" value="CAM80659.1"/>
    <property type="molecule type" value="Genomic_DNA"/>
</dbReference>
<dbReference type="RefSeq" id="WP_011944944.1">
    <property type="nucleotide sequence ID" value="NC_009488.1"/>
</dbReference>
<dbReference type="SMR" id="A5CEN4"/>
<dbReference type="KEGG" id="ots:OTBS_1566"/>
<dbReference type="eggNOG" id="COG0779">
    <property type="taxonomic scope" value="Bacteria"/>
</dbReference>
<dbReference type="HOGENOM" id="CLU_070525_2_1_5"/>
<dbReference type="Proteomes" id="UP000001565">
    <property type="component" value="Chromosome"/>
</dbReference>
<dbReference type="GO" id="GO:0005829">
    <property type="term" value="C:cytosol"/>
    <property type="evidence" value="ECO:0007669"/>
    <property type="project" value="TreeGrafter"/>
</dbReference>
<dbReference type="GO" id="GO:0000028">
    <property type="term" value="P:ribosomal small subunit assembly"/>
    <property type="evidence" value="ECO:0007669"/>
    <property type="project" value="TreeGrafter"/>
</dbReference>
<dbReference type="GO" id="GO:0006412">
    <property type="term" value="P:translation"/>
    <property type="evidence" value="ECO:0007669"/>
    <property type="project" value="TreeGrafter"/>
</dbReference>
<dbReference type="CDD" id="cd01734">
    <property type="entry name" value="YlxS_C"/>
    <property type="match status" value="1"/>
</dbReference>
<dbReference type="Gene3D" id="2.30.30.180">
    <property type="entry name" value="Ribosome maturation factor RimP, C-terminal domain"/>
    <property type="match status" value="1"/>
</dbReference>
<dbReference type="Gene3D" id="3.30.300.70">
    <property type="entry name" value="RimP-like superfamily, N-terminal"/>
    <property type="match status" value="1"/>
</dbReference>
<dbReference type="HAMAP" id="MF_01077">
    <property type="entry name" value="RimP"/>
    <property type="match status" value="1"/>
</dbReference>
<dbReference type="InterPro" id="IPR003728">
    <property type="entry name" value="Ribosome_maturation_RimP"/>
</dbReference>
<dbReference type="InterPro" id="IPR028998">
    <property type="entry name" value="RimP_C"/>
</dbReference>
<dbReference type="InterPro" id="IPR036847">
    <property type="entry name" value="RimP_C_sf"/>
</dbReference>
<dbReference type="InterPro" id="IPR028989">
    <property type="entry name" value="RimP_N"/>
</dbReference>
<dbReference type="InterPro" id="IPR035956">
    <property type="entry name" value="RimP_N_sf"/>
</dbReference>
<dbReference type="PANTHER" id="PTHR33867">
    <property type="entry name" value="RIBOSOME MATURATION FACTOR RIMP"/>
    <property type="match status" value="1"/>
</dbReference>
<dbReference type="PANTHER" id="PTHR33867:SF1">
    <property type="entry name" value="RIBOSOME MATURATION FACTOR RIMP"/>
    <property type="match status" value="1"/>
</dbReference>
<dbReference type="Pfam" id="PF17384">
    <property type="entry name" value="DUF150_C"/>
    <property type="match status" value="1"/>
</dbReference>
<dbReference type="Pfam" id="PF02576">
    <property type="entry name" value="RimP_N"/>
    <property type="match status" value="1"/>
</dbReference>
<dbReference type="SUPFAM" id="SSF74942">
    <property type="entry name" value="YhbC-like, C-terminal domain"/>
    <property type="match status" value="1"/>
</dbReference>
<dbReference type="SUPFAM" id="SSF75420">
    <property type="entry name" value="YhbC-like, N-terminal domain"/>
    <property type="match status" value="1"/>
</dbReference>
<accession>A5CEN4</accession>
<protein>
    <recommendedName>
        <fullName evidence="1">Ribosome maturation factor RimP</fullName>
    </recommendedName>
</protein>
<comment type="function">
    <text evidence="1">Required for maturation of 30S ribosomal subunits.</text>
</comment>
<comment type="subcellular location">
    <subcellularLocation>
        <location evidence="1">Cytoplasm</location>
    </subcellularLocation>
</comment>
<comment type="similarity">
    <text evidence="1">Belongs to the RimP family.</text>
</comment>
<feature type="chain" id="PRO_1000149799" description="Ribosome maturation factor RimP">
    <location>
        <begin position="1"/>
        <end position="160"/>
    </location>
</feature>
<organism>
    <name type="scientific">Orientia tsutsugamushi (strain Boryong)</name>
    <name type="common">Rickettsia tsutsugamushi</name>
    <dbReference type="NCBI Taxonomy" id="357244"/>
    <lineage>
        <taxon>Bacteria</taxon>
        <taxon>Pseudomonadati</taxon>
        <taxon>Pseudomonadota</taxon>
        <taxon>Alphaproteobacteria</taxon>
        <taxon>Rickettsiales</taxon>
        <taxon>Rickettsiaceae</taxon>
        <taxon>Rickettsieae</taxon>
        <taxon>Orientia</taxon>
    </lineage>
</organism>
<name>RIMP_ORITB</name>
<sequence>MLNDKIKELITPTAKTLGYKVINVSFIVKPAILKIVIDRFDEKKVNVLDCQVFSKAISAVLDVENIIPGKYFLEVESAGIERSLMDLEDFIKFLGYTIQVKLVAAINENKKYIGVISNIKGQEITLNLQNDSTIAIDYDNIKVAKIVFTDEMFRQITKNY</sequence>
<keyword id="KW-0963">Cytoplasm</keyword>
<keyword id="KW-1185">Reference proteome</keyword>
<keyword id="KW-0690">Ribosome biogenesis</keyword>
<proteinExistence type="inferred from homology"/>
<evidence type="ECO:0000255" key="1">
    <source>
        <dbReference type="HAMAP-Rule" id="MF_01077"/>
    </source>
</evidence>
<gene>
    <name evidence="1" type="primary">rimP</name>
    <name type="ordered locus">OTBS_1566</name>
</gene>
<reference key="1">
    <citation type="journal article" date="2007" name="Proc. Natl. Acad. Sci. U.S.A.">
        <title>The Orientia tsutsugamushi genome reveals massive proliferation of conjugative type IV secretion system and host-cell interaction genes.</title>
        <authorList>
            <person name="Cho N.-H."/>
            <person name="Kim H.-R."/>
            <person name="Lee J.-H."/>
            <person name="Kim S.-Y."/>
            <person name="Kim J."/>
            <person name="Cha S."/>
            <person name="Kim S.-Y."/>
            <person name="Darby A.C."/>
            <person name="Fuxelius H.-H."/>
            <person name="Yin J."/>
            <person name="Kim J.H."/>
            <person name="Kim J."/>
            <person name="Lee S.J."/>
            <person name="Koh Y.-S."/>
            <person name="Jang W.-J."/>
            <person name="Park K.-H."/>
            <person name="Andersson S.G.E."/>
            <person name="Choi M.-S."/>
            <person name="Kim I.-S."/>
        </authorList>
    </citation>
    <scope>NUCLEOTIDE SEQUENCE [LARGE SCALE GENOMIC DNA]</scope>
    <source>
        <strain>Boryong</strain>
    </source>
</reference>